<proteinExistence type="evidence at protein level"/>
<dbReference type="EMBL" id="AY226182">
    <property type="protein sequence ID" value="AAO73448.1"/>
    <property type="molecule type" value="mRNA"/>
</dbReference>
<dbReference type="EMBL" id="BC061242">
    <property type="protein sequence ID" value="AAH61242.1"/>
    <property type="molecule type" value="mRNA"/>
</dbReference>
<dbReference type="EMBL" id="BC111107">
    <property type="protein sequence ID" value="AAI11108.1"/>
    <property type="molecule type" value="mRNA"/>
</dbReference>
<dbReference type="CCDS" id="CCDS29155.1"/>
<dbReference type="RefSeq" id="NP_957708.1">
    <property type="nucleotide sequence ID" value="NM_201256.4"/>
</dbReference>
<dbReference type="SMR" id="Q80VV3"/>
<dbReference type="FunCoup" id="Q80VV3">
    <property type="interactions" value="129"/>
</dbReference>
<dbReference type="STRING" id="10090.ENSMUSP00000039298"/>
<dbReference type="iPTMnet" id="Q80VV3"/>
<dbReference type="PhosphoSitePlus" id="Q80VV3"/>
<dbReference type="PaxDb" id="10090-ENSMUSP00000039298"/>
<dbReference type="ProteomicsDB" id="296419"/>
<dbReference type="Antibodypedia" id="34915">
    <property type="antibodies" value="134 antibodies from 17 providers"/>
</dbReference>
<dbReference type="DNASU" id="108112"/>
<dbReference type="Ensembl" id="ENSMUST00000036765.8">
    <property type="protein sequence ID" value="ENSMUSP00000039298.8"/>
    <property type="gene ID" value="ENSMUSG00000090264.2"/>
</dbReference>
<dbReference type="GeneID" id="108112"/>
<dbReference type="KEGG" id="mmu:108112"/>
<dbReference type="UCSC" id="uc008enx.2">
    <property type="organism name" value="mouse"/>
</dbReference>
<dbReference type="AGR" id="MGI:1270847"/>
<dbReference type="CTD" id="8637"/>
<dbReference type="MGI" id="MGI:1270847">
    <property type="gene designation" value="Eif4ebp3"/>
</dbReference>
<dbReference type="VEuPathDB" id="HostDB:ENSMUSG00000090264"/>
<dbReference type="eggNOG" id="ENOG502S03G">
    <property type="taxonomic scope" value="Eukaryota"/>
</dbReference>
<dbReference type="GeneTree" id="ENSGT00940000163328"/>
<dbReference type="HOGENOM" id="CLU_111706_0_0_1"/>
<dbReference type="InParanoid" id="Q80VV3"/>
<dbReference type="OMA" id="IPGCRDQ"/>
<dbReference type="OrthoDB" id="19729at2759"/>
<dbReference type="PhylomeDB" id="Q80VV3"/>
<dbReference type="TreeFam" id="TF101530"/>
<dbReference type="BioGRID-ORCS" id="108112">
    <property type="hits" value="1 hit in 78 CRISPR screens"/>
</dbReference>
<dbReference type="ChiTaRS" id="Eif4ebp3">
    <property type="organism name" value="mouse"/>
</dbReference>
<dbReference type="PRO" id="PR:Q80VV3"/>
<dbReference type="Proteomes" id="UP000000589">
    <property type="component" value="Chromosome 18"/>
</dbReference>
<dbReference type="RNAct" id="Q80VV3">
    <property type="molecule type" value="protein"/>
</dbReference>
<dbReference type="Bgee" id="ENSMUSG00000090264">
    <property type="expression patterns" value="Expressed in ileum and 60 other cell types or tissues"/>
</dbReference>
<dbReference type="GO" id="GO:0005737">
    <property type="term" value="C:cytoplasm"/>
    <property type="evidence" value="ECO:0007669"/>
    <property type="project" value="UniProtKB-SubCell"/>
</dbReference>
<dbReference type="GO" id="GO:0005634">
    <property type="term" value="C:nucleus"/>
    <property type="evidence" value="ECO:0007669"/>
    <property type="project" value="UniProtKB-SubCell"/>
</dbReference>
<dbReference type="GO" id="GO:0008190">
    <property type="term" value="F:eukaryotic initiation factor 4E binding"/>
    <property type="evidence" value="ECO:0007669"/>
    <property type="project" value="InterPro"/>
</dbReference>
<dbReference type="GO" id="GO:0045947">
    <property type="term" value="P:negative regulation of translational initiation"/>
    <property type="evidence" value="ECO:0007669"/>
    <property type="project" value="InterPro"/>
</dbReference>
<dbReference type="InterPro" id="IPR008606">
    <property type="entry name" value="EIF4EBP"/>
</dbReference>
<dbReference type="PANTHER" id="PTHR12669">
    <property type="entry name" value="EUKARYOTIC TRANSLATION INITIATION FACTOR 4E-BINDING PROTEIN"/>
    <property type="match status" value="1"/>
</dbReference>
<dbReference type="PANTHER" id="PTHR12669:SF5">
    <property type="entry name" value="EUKARYOTIC TRANSLATION INITIATION FACTOR 4E-BINDING PROTEIN 3"/>
    <property type="match status" value="1"/>
</dbReference>
<dbReference type="Pfam" id="PF05456">
    <property type="entry name" value="eIF_4EBP"/>
    <property type="match status" value="1"/>
</dbReference>
<evidence type="ECO:0000250" key="1">
    <source>
        <dbReference type="UniProtKB" id="O60516"/>
    </source>
</evidence>
<evidence type="ECO:0000250" key="2">
    <source>
        <dbReference type="UniProtKB" id="P70445"/>
    </source>
</evidence>
<evidence type="ECO:0000250" key="3">
    <source>
        <dbReference type="UniProtKB" id="Q13541"/>
    </source>
</evidence>
<evidence type="ECO:0000256" key="4">
    <source>
        <dbReference type="SAM" id="MobiDB-lite"/>
    </source>
</evidence>
<evidence type="ECO:0000305" key="5"/>
<reference key="1">
    <citation type="submission" date="2003-01" db="EMBL/GenBank/DDBJ databases">
        <title>Two overlapping reading frames in the second exon of the translational inhibitor 4E-BP3.</title>
        <authorList>
            <person name="Poulin F."/>
            <person name="Sonenberg N."/>
        </authorList>
    </citation>
    <scope>NUCLEOTIDE SEQUENCE [MRNA]</scope>
    <source>
        <strain>C57BL/6J</strain>
    </source>
</reference>
<reference key="2">
    <citation type="journal article" date="2004" name="Genome Res.">
        <title>The status, quality, and expansion of the NIH full-length cDNA project: the Mammalian Gene Collection (MGC).</title>
        <authorList>
            <consortium name="The MGC Project Team"/>
        </authorList>
    </citation>
    <scope>NUCLEOTIDE SEQUENCE [LARGE SCALE MRNA]</scope>
    <source>
        <tissue>Testis</tissue>
    </source>
</reference>
<reference key="3">
    <citation type="journal article" date="2010" name="Cell">
        <title>A tissue-specific atlas of mouse protein phosphorylation and expression.</title>
        <authorList>
            <person name="Huttlin E.L."/>
            <person name="Jedrychowski M.P."/>
            <person name="Elias J.E."/>
            <person name="Goswami T."/>
            <person name="Rad R."/>
            <person name="Beausoleil S.A."/>
            <person name="Villen J."/>
            <person name="Haas W."/>
            <person name="Sowa M.E."/>
            <person name="Gygi S.P."/>
        </authorList>
    </citation>
    <scope>IDENTIFICATION BY MASS SPECTROMETRY [LARGE SCALE ANALYSIS]</scope>
    <source>
        <tissue>Liver</tissue>
    </source>
</reference>
<keyword id="KW-0963">Cytoplasm</keyword>
<keyword id="KW-0539">Nucleus</keyword>
<keyword id="KW-0597">Phosphoprotein</keyword>
<keyword id="KW-0652">Protein synthesis inhibitor</keyword>
<keyword id="KW-1185">Reference proteome</keyword>
<keyword id="KW-0810">Translation regulation</keyword>
<protein>
    <recommendedName>
        <fullName>Eukaryotic translation initiation factor 4E-binding protein 3</fullName>
        <shortName>4E-BP3</shortName>
        <shortName>eIF4E-binding protein 3</shortName>
    </recommendedName>
</protein>
<sequence>MSSSTSCPIPGCRDQLPDGYSTTPGGTLYATTPGGTRIIYDRKFLLECKNSPIARTPPCCLPQIPGVTTLPAVPPSKLELLKEQKQTEVEITDDEQFEMDM</sequence>
<feature type="chain" id="PRO_0000190519" description="Eukaryotic translation initiation factor 4E-binding protein 3">
    <location>
        <begin position="1"/>
        <end position="101"/>
    </location>
</feature>
<feature type="region of interest" description="Disordered" evidence="4">
    <location>
        <begin position="1"/>
        <end position="28"/>
    </location>
</feature>
<feature type="short sequence motif" description="YXXXXLphi motif" evidence="2">
    <location>
        <begin position="40"/>
        <end position="46"/>
    </location>
</feature>
<feature type="short sequence motif" description="TOS motif" evidence="3">
    <location>
        <begin position="97"/>
        <end position="101"/>
    </location>
</feature>
<name>4EBP3_MOUSE</name>
<accession>Q80VV3</accession>
<accession>Q2TA53</accession>
<organism>
    <name type="scientific">Mus musculus</name>
    <name type="common">Mouse</name>
    <dbReference type="NCBI Taxonomy" id="10090"/>
    <lineage>
        <taxon>Eukaryota</taxon>
        <taxon>Metazoa</taxon>
        <taxon>Chordata</taxon>
        <taxon>Craniata</taxon>
        <taxon>Vertebrata</taxon>
        <taxon>Euteleostomi</taxon>
        <taxon>Mammalia</taxon>
        <taxon>Eutheria</taxon>
        <taxon>Euarchontoglires</taxon>
        <taxon>Glires</taxon>
        <taxon>Rodentia</taxon>
        <taxon>Myomorpha</taxon>
        <taxon>Muroidea</taxon>
        <taxon>Muridae</taxon>
        <taxon>Murinae</taxon>
        <taxon>Mus</taxon>
        <taxon>Mus</taxon>
    </lineage>
</organism>
<comment type="function">
    <text evidence="1 3">Repressor of translation initiation that regulates EIF4E activity by preventing its assembly into the eIF4F complex: the hypophosphorylated form competes with EIF4G1/EIF4G3 and strongly binds to EIF4E, leading to repression of translation. In contrast, the hyperphosphorylated form dissociates from EIF4E, allowing interaction between EIF4G1/EIF4G3 and EIF4E, leading to initiation of translation. Inhibits EIF4E-mediated mRNA nuclear export (By similarity).</text>
</comment>
<comment type="subunit">
    <text evidence="1">Interacts with EIF4E (By similarity). Interacts with RPA2 (via N-terminus); the interaction enhances EIF4EBP3-mediated inhibition of EIF4E-mediated mRNA nuclear export (By similarity).</text>
</comment>
<comment type="subcellular location">
    <subcellularLocation>
        <location evidence="1">Cytoplasm</location>
    </subcellularLocation>
    <subcellularLocation>
        <location evidence="1">Nucleus</location>
    </subcellularLocation>
</comment>
<comment type="PTM">
    <text evidence="1">Phosphorylated.</text>
</comment>
<comment type="similarity">
    <text evidence="5">Belongs to the eIF4E-binding protein family.</text>
</comment>
<gene>
    <name type="primary">Eif4ebp3</name>
</gene>